<reference evidence="8" key="1">
    <citation type="journal article" date="2005" name="J. Biochem.">
        <title>Contribution of the N-terminal and C-terminal domains of haemaphysalin to inhibition of activation of plasma kallikrein-kinin system.</title>
        <authorList>
            <person name="Kato N."/>
            <person name="Okayama T."/>
            <person name="Isawa H."/>
            <person name="Yuda M."/>
            <person name="Chinzei Y."/>
            <person name="Iwanaga S."/>
        </authorList>
    </citation>
    <scope>FUNCTION</scope>
    <scope>ACTIVITY REGULATION</scope>
    <scope>INTERACTION WITH HOST F12 AND KNG1</scope>
</reference>
<reference evidence="8" key="2">
    <citation type="journal article" date="2005" name="Thromb. Haemost.">
        <title>Identification and characterization of the plasma kallikrein-kinin system inhibitor, haemaphysalin, from hard tick, Haemaphysalis longicornis.</title>
        <authorList>
            <person name="Kato N."/>
            <person name="Iwanaga S."/>
            <person name="Okayama T."/>
            <person name="Isawa H."/>
            <person name="Yuda M."/>
            <person name="Chinzei Y."/>
        </authorList>
    </citation>
    <scope>FUNCTION</scope>
    <scope>ACTIVITY REGULATION</scope>
    <scope>INTERACTION WITH HOST F12 AND KNG1</scope>
    <scope>TISSUE SPECIFICITY</scope>
</reference>
<evidence type="ECO:0000255" key="1"/>
<evidence type="ECO:0000255" key="2">
    <source>
        <dbReference type="PROSITE-ProRule" id="PRU00031"/>
    </source>
</evidence>
<evidence type="ECO:0000255" key="3">
    <source>
        <dbReference type="PROSITE-ProRule" id="PRU00498"/>
    </source>
</evidence>
<evidence type="ECO:0000269" key="4">
    <source>
    </source>
</evidence>
<evidence type="ECO:0000269" key="5">
    <source>
    </source>
</evidence>
<evidence type="ECO:0000303" key="6">
    <source>
    </source>
</evidence>
<evidence type="ECO:0000303" key="7">
    <source>
    </source>
</evidence>
<evidence type="ECO:0000305" key="8"/>
<name>HAEM_HAELO</name>
<accession>C0HMD5</accession>
<organism>
    <name type="scientific">Haemaphysalis longicornis</name>
    <name type="common">Bush tick</name>
    <dbReference type="NCBI Taxonomy" id="44386"/>
    <lineage>
        <taxon>Eukaryota</taxon>
        <taxon>Metazoa</taxon>
        <taxon>Ecdysozoa</taxon>
        <taxon>Arthropoda</taxon>
        <taxon>Chelicerata</taxon>
        <taxon>Arachnida</taxon>
        <taxon>Acari</taxon>
        <taxon>Parasitiformes</taxon>
        <taxon>Ixodida</taxon>
        <taxon>Ixodoidea</taxon>
        <taxon>Ixodidae</taxon>
        <taxon>Haemaphysalinae</taxon>
        <taxon>Haemaphysalis</taxon>
    </lineage>
</organism>
<feature type="signal peptide" evidence="1">
    <location>
        <begin position="1"/>
        <end position="17"/>
    </location>
</feature>
<feature type="chain" id="PRO_0000461919" description="Haemaphysalin" evidence="1">
    <location>
        <begin position="18"/>
        <end position="162"/>
    </location>
</feature>
<feature type="domain" description="BPTI/Kunitz inhibitor" evidence="2">
    <location>
        <begin position="90"/>
        <end position="145"/>
    </location>
</feature>
<feature type="glycosylation site" description="N-linked (GlcNAc...) asparagine" evidence="3">
    <location>
        <position position="57"/>
    </location>
</feature>
<feature type="disulfide bond" evidence="2">
    <location>
        <begin position="90"/>
        <end position="145"/>
    </location>
</feature>
<feature type="disulfide bond" evidence="2">
    <location>
        <begin position="116"/>
        <end position="141"/>
    </location>
</feature>
<sequence>MHLPATIVFFTCTGVFSTTVFAKYRANPALCKVPIKSATGNCRNGNDLPSWLYGYNNITKKCVQYPTCFKRLAFESNEICLETCNKQSRCLQPPETGIFDIGWSTYYVYNSRKNMCKPVKKMKFRKTTSKQKNLFNSEEECQQECMPSTTPIYNVAQGTYPR</sequence>
<proteinExistence type="evidence at protein level"/>
<comment type="function">
    <text evidence="4 5">Anticoagulant protein (PubMed:15711755, PubMed:16169873). Inhibits activation of host plasma kallikrein-kinin system by interfering with reciprocal activation between coagulation factor XII (F12) and prekallikrein (KLKB1) without affecting their amidolytic activities (PubMed:15711755, PubMed:16169873).</text>
</comment>
<comment type="activity regulation">
    <text evidence="4 5">Zn(2+) modulates binding to host coagulation factor XII (F12) and high molecular weight kininogen (KNG1).</text>
</comment>
<comment type="subunit">
    <text evidence="4 5">Interacts with host coagulation factor XII (F12) (inactive and activated) (via fibronectin type II domain) (PubMed:15711755, PubMed:16169873). Interacts with host high molecular weight kininogen (KNG1) (via amino acids 421-466 and 459-513) (PubMed:15711755, PubMed:16169873).</text>
</comment>
<comment type="subcellular location">
    <subcellularLocation>
        <location evidence="8">Secreted</location>
    </subcellularLocation>
</comment>
<comment type="tissue specificity">
    <text evidence="4">Salivary gland.</text>
</comment>
<keyword id="KW-1203">Blood coagulation cascade inhibiting toxin</keyword>
<keyword id="KW-1015">Disulfide bond</keyword>
<keyword id="KW-0325">Glycoprotein</keyword>
<keyword id="KW-1199">Hemostasis impairing toxin</keyword>
<keyword id="KW-0646">Protease inhibitor</keyword>
<keyword id="KW-0964">Secreted</keyword>
<keyword id="KW-0722">Serine protease inhibitor</keyword>
<keyword id="KW-0732">Signal</keyword>
<keyword id="KW-0800">Toxin</keyword>
<protein>
    <recommendedName>
        <fullName evidence="6 7">Haemaphysalin</fullName>
    </recommendedName>
</protein>
<dbReference type="Gene3D" id="4.10.410.10">
    <property type="entry name" value="Pancreatic trypsin inhibitor Kunitz domain"/>
    <property type="match status" value="1"/>
</dbReference>
<dbReference type="InterPro" id="IPR036880">
    <property type="entry name" value="Kunitz_BPTI_sf"/>
</dbReference>
<dbReference type="SUPFAM" id="SSF57362">
    <property type="entry name" value="BPTI-like"/>
    <property type="match status" value="1"/>
</dbReference>